<gene>
    <name type="ordered locus">DSY1893</name>
</gene>
<name>Y1893_DESHY</name>
<organism>
    <name type="scientific">Desulfitobacterium hafniense (strain Y51)</name>
    <dbReference type="NCBI Taxonomy" id="138119"/>
    <lineage>
        <taxon>Bacteria</taxon>
        <taxon>Bacillati</taxon>
        <taxon>Bacillota</taxon>
        <taxon>Clostridia</taxon>
        <taxon>Eubacteriales</taxon>
        <taxon>Desulfitobacteriaceae</taxon>
        <taxon>Desulfitobacterium</taxon>
    </lineage>
</organism>
<comment type="subcellular location">
    <subcellularLocation>
        <location evidence="1">Cell membrane</location>
        <topology evidence="1">Multi-pass membrane protein</topology>
    </subcellularLocation>
</comment>
<comment type="similarity">
    <text evidence="1">Belongs to the UPF0316 family.</text>
</comment>
<reference key="1">
    <citation type="journal article" date="2006" name="J. Bacteriol.">
        <title>Complete genome sequence of the dehalorespiring bacterium Desulfitobacterium hafniense Y51 and comparison with Dehalococcoides ethenogenes 195.</title>
        <authorList>
            <person name="Nonaka H."/>
            <person name="Keresztes G."/>
            <person name="Shinoda Y."/>
            <person name="Ikenaga Y."/>
            <person name="Abe M."/>
            <person name="Naito K."/>
            <person name="Inatomi K."/>
            <person name="Furukawa K."/>
            <person name="Inui M."/>
            <person name="Yukawa H."/>
        </authorList>
    </citation>
    <scope>NUCLEOTIDE SEQUENCE [LARGE SCALE GENOMIC DNA]</scope>
    <source>
        <strain>Y51</strain>
    </source>
</reference>
<accession>Q24WB0</accession>
<dbReference type="EMBL" id="AP008230">
    <property type="protein sequence ID" value="BAE83682.1"/>
    <property type="molecule type" value="Genomic_DNA"/>
</dbReference>
<dbReference type="RefSeq" id="WP_011459927.1">
    <property type="nucleotide sequence ID" value="NC_007907.1"/>
</dbReference>
<dbReference type="SMR" id="Q24WB0"/>
<dbReference type="STRING" id="138119.DSY1893"/>
<dbReference type="KEGG" id="dsy:DSY1893"/>
<dbReference type="eggNOG" id="COG4843">
    <property type="taxonomic scope" value="Bacteria"/>
</dbReference>
<dbReference type="HOGENOM" id="CLU_106166_1_0_9"/>
<dbReference type="Proteomes" id="UP000001946">
    <property type="component" value="Chromosome"/>
</dbReference>
<dbReference type="GO" id="GO:0005886">
    <property type="term" value="C:plasma membrane"/>
    <property type="evidence" value="ECO:0007669"/>
    <property type="project" value="UniProtKB-SubCell"/>
</dbReference>
<dbReference type="CDD" id="cd16381">
    <property type="entry name" value="YitT_C_like_1"/>
    <property type="match status" value="1"/>
</dbReference>
<dbReference type="HAMAP" id="MF_01515">
    <property type="entry name" value="UPF0316"/>
    <property type="match status" value="1"/>
</dbReference>
<dbReference type="InterPro" id="IPR019264">
    <property type="entry name" value="DUF2179"/>
</dbReference>
<dbReference type="InterPro" id="IPR044035">
    <property type="entry name" value="DUF5698"/>
</dbReference>
<dbReference type="InterPro" id="IPR022930">
    <property type="entry name" value="UPF0316"/>
</dbReference>
<dbReference type="NCBIfam" id="NF003194">
    <property type="entry name" value="PRK04164.1-5"/>
    <property type="match status" value="1"/>
</dbReference>
<dbReference type="PANTHER" id="PTHR40060">
    <property type="entry name" value="UPF0316 PROTEIN YEBE"/>
    <property type="match status" value="1"/>
</dbReference>
<dbReference type="PANTHER" id="PTHR40060:SF1">
    <property type="entry name" value="UPF0316 PROTEIN YEBE"/>
    <property type="match status" value="1"/>
</dbReference>
<dbReference type="Pfam" id="PF10035">
    <property type="entry name" value="DUF2179"/>
    <property type="match status" value="1"/>
</dbReference>
<dbReference type="Pfam" id="PF18955">
    <property type="entry name" value="DUF5698"/>
    <property type="match status" value="1"/>
</dbReference>
<evidence type="ECO:0000255" key="1">
    <source>
        <dbReference type="HAMAP-Rule" id="MF_01515"/>
    </source>
</evidence>
<sequence length="174" mass="19624">MGSILQFVLIIITINITYVTLTTIRFILMIKGMRVYASLLSVLEVFIYIMGLSIILDNLDSYWNIAAYCCGYGVGVYLGSRIEERLALGYIMAQVIVECEYQGLAGELRDAGFGVTSWLGEGKTGPRMVMMVLAKRNRQKELLNRIDSLCSNAFVIFEEPKNFRGGFWAKKVLH</sequence>
<proteinExistence type="inferred from homology"/>
<keyword id="KW-1003">Cell membrane</keyword>
<keyword id="KW-0472">Membrane</keyword>
<keyword id="KW-1185">Reference proteome</keyword>
<keyword id="KW-0812">Transmembrane</keyword>
<keyword id="KW-1133">Transmembrane helix</keyword>
<feature type="chain" id="PRO_0000250346" description="UPF0316 protein DSY1893">
    <location>
        <begin position="1"/>
        <end position="174"/>
    </location>
</feature>
<feature type="transmembrane region" description="Helical" evidence="1">
    <location>
        <begin position="4"/>
        <end position="24"/>
    </location>
</feature>
<feature type="transmembrane region" description="Helical" evidence="1">
    <location>
        <begin position="35"/>
        <end position="55"/>
    </location>
</feature>
<feature type="transmembrane region" description="Helical" evidence="1">
    <location>
        <begin position="59"/>
        <end position="79"/>
    </location>
</feature>
<protein>
    <recommendedName>
        <fullName evidence="1">UPF0316 protein DSY1893</fullName>
    </recommendedName>
</protein>